<organism>
    <name type="scientific">Salmonella enteritidis PT4 (strain P125109)</name>
    <dbReference type="NCBI Taxonomy" id="550537"/>
    <lineage>
        <taxon>Bacteria</taxon>
        <taxon>Pseudomonadati</taxon>
        <taxon>Pseudomonadota</taxon>
        <taxon>Gammaproteobacteria</taxon>
        <taxon>Enterobacterales</taxon>
        <taxon>Enterobacteriaceae</taxon>
        <taxon>Salmonella</taxon>
    </lineage>
</organism>
<accession>B5QW18</accession>
<comment type="function">
    <text evidence="1">Catalyzes the formation of 4-diphosphocytidyl-2-C-methyl-D-erythritol from CTP and 2-C-methyl-D-erythritol 4-phosphate (MEP).</text>
</comment>
<comment type="catalytic activity">
    <reaction evidence="1">
        <text>2-C-methyl-D-erythritol 4-phosphate + CTP + H(+) = 4-CDP-2-C-methyl-D-erythritol + diphosphate</text>
        <dbReference type="Rhea" id="RHEA:13429"/>
        <dbReference type="ChEBI" id="CHEBI:15378"/>
        <dbReference type="ChEBI" id="CHEBI:33019"/>
        <dbReference type="ChEBI" id="CHEBI:37563"/>
        <dbReference type="ChEBI" id="CHEBI:57823"/>
        <dbReference type="ChEBI" id="CHEBI:58262"/>
        <dbReference type="EC" id="2.7.7.60"/>
    </reaction>
</comment>
<comment type="pathway">
    <text evidence="1">Isoprenoid biosynthesis; isopentenyl diphosphate biosynthesis via DXP pathway; isopentenyl diphosphate from 1-deoxy-D-xylulose 5-phosphate: step 2/6.</text>
</comment>
<comment type="subunit">
    <text evidence="1">Homodimer.</text>
</comment>
<comment type="similarity">
    <text evidence="1">Belongs to the IspD/TarI cytidylyltransferase family. IspD subfamily.</text>
</comment>
<evidence type="ECO:0000255" key="1">
    <source>
        <dbReference type="HAMAP-Rule" id="MF_00108"/>
    </source>
</evidence>
<keyword id="KW-0414">Isoprene biosynthesis</keyword>
<keyword id="KW-0548">Nucleotidyltransferase</keyword>
<keyword id="KW-0808">Transferase</keyword>
<name>ISPD_SALEP</name>
<feature type="chain" id="PRO_1000094344" description="2-C-methyl-D-erythritol 4-phosphate cytidylyltransferase">
    <location>
        <begin position="1"/>
        <end position="236"/>
    </location>
</feature>
<feature type="site" description="Transition state stabilizer" evidence="1">
    <location>
        <position position="20"/>
    </location>
</feature>
<feature type="site" description="Transition state stabilizer" evidence="1">
    <location>
        <position position="27"/>
    </location>
</feature>
<feature type="site" description="Positions MEP for the nucleophilic attack" evidence="1">
    <location>
        <position position="157"/>
    </location>
</feature>
<feature type="site" description="Positions MEP for the nucleophilic attack" evidence="1">
    <location>
        <position position="213"/>
    </location>
</feature>
<reference key="1">
    <citation type="journal article" date="2008" name="Genome Res.">
        <title>Comparative genome analysis of Salmonella enteritidis PT4 and Salmonella gallinarum 287/91 provides insights into evolutionary and host adaptation pathways.</title>
        <authorList>
            <person name="Thomson N.R."/>
            <person name="Clayton D.J."/>
            <person name="Windhorst D."/>
            <person name="Vernikos G."/>
            <person name="Davidson S."/>
            <person name="Churcher C."/>
            <person name="Quail M.A."/>
            <person name="Stevens M."/>
            <person name="Jones M.A."/>
            <person name="Watson M."/>
            <person name="Barron A."/>
            <person name="Layton A."/>
            <person name="Pickard D."/>
            <person name="Kingsley R.A."/>
            <person name="Bignell A."/>
            <person name="Clark L."/>
            <person name="Harris B."/>
            <person name="Ormond D."/>
            <person name="Abdellah Z."/>
            <person name="Brooks K."/>
            <person name="Cherevach I."/>
            <person name="Chillingworth T."/>
            <person name="Woodward J."/>
            <person name="Norberczak H."/>
            <person name="Lord A."/>
            <person name="Arrowsmith C."/>
            <person name="Jagels K."/>
            <person name="Moule S."/>
            <person name="Mungall K."/>
            <person name="Saunders M."/>
            <person name="Whitehead S."/>
            <person name="Chabalgoity J.A."/>
            <person name="Maskell D."/>
            <person name="Humphreys T."/>
            <person name="Roberts M."/>
            <person name="Barrow P.A."/>
            <person name="Dougan G."/>
            <person name="Parkhill J."/>
        </authorList>
    </citation>
    <scope>NUCLEOTIDE SEQUENCE [LARGE SCALE GENOMIC DNA]</scope>
    <source>
        <strain>P125109</strain>
    </source>
</reference>
<protein>
    <recommendedName>
        <fullName evidence="1">2-C-methyl-D-erythritol 4-phosphate cytidylyltransferase</fullName>
        <ecNumber evidence="1">2.7.7.60</ecNumber>
    </recommendedName>
    <alternativeName>
        <fullName evidence="1">4-diphosphocytidyl-2C-methyl-D-erythritol synthase</fullName>
    </alternativeName>
    <alternativeName>
        <fullName evidence="1">MEP cytidylyltransferase</fullName>
        <shortName evidence="1">MCT</shortName>
    </alternativeName>
</protein>
<dbReference type="EC" id="2.7.7.60" evidence="1"/>
<dbReference type="EMBL" id="AM933172">
    <property type="protein sequence ID" value="CAR34348.1"/>
    <property type="molecule type" value="Genomic_DNA"/>
</dbReference>
<dbReference type="RefSeq" id="WP_000741653.1">
    <property type="nucleotide sequence ID" value="NC_011294.1"/>
</dbReference>
<dbReference type="SMR" id="B5QW18"/>
<dbReference type="KEGG" id="set:SEN2769"/>
<dbReference type="HOGENOM" id="CLU_061281_3_1_6"/>
<dbReference type="UniPathway" id="UPA00056">
    <property type="reaction ID" value="UER00093"/>
</dbReference>
<dbReference type="Proteomes" id="UP000000613">
    <property type="component" value="Chromosome"/>
</dbReference>
<dbReference type="GO" id="GO:0050518">
    <property type="term" value="F:2-C-methyl-D-erythritol 4-phosphate cytidylyltransferase activity"/>
    <property type="evidence" value="ECO:0007669"/>
    <property type="project" value="UniProtKB-UniRule"/>
</dbReference>
<dbReference type="GO" id="GO:0019288">
    <property type="term" value="P:isopentenyl diphosphate biosynthetic process, methylerythritol 4-phosphate pathway"/>
    <property type="evidence" value="ECO:0007669"/>
    <property type="project" value="UniProtKB-UniRule"/>
</dbReference>
<dbReference type="CDD" id="cd02516">
    <property type="entry name" value="CDP-ME_synthetase"/>
    <property type="match status" value="1"/>
</dbReference>
<dbReference type="FunFam" id="3.90.550.10:FF:000003">
    <property type="entry name" value="2-C-methyl-D-erythritol 4-phosphate cytidylyltransferase"/>
    <property type="match status" value="1"/>
</dbReference>
<dbReference type="Gene3D" id="3.90.550.10">
    <property type="entry name" value="Spore Coat Polysaccharide Biosynthesis Protein SpsA, Chain A"/>
    <property type="match status" value="1"/>
</dbReference>
<dbReference type="HAMAP" id="MF_00108">
    <property type="entry name" value="IspD"/>
    <property type="match status" value="1"/>
</dbReference>
<dbReference type="InterPro" id="IPR001228">
    <property type="entry name" value="IspD"/>
</dbReference>
<dbReference type="InterPro" id="IPR034683">
    <property type="entry name" value="IspD/TarI"/>
</dbReference>
<dbReference type="InterPro" id="IPR050088">
    <property type="entry name" value="IspD/TarI_cytidylyltransf_bact"/>
</dbReference>
<dbReference type="InterPro" id="IPR018294">
    <property type="entry name" value="ISPD_synthase_CS"/>
</dbReference>
<dbReference type="InterPro" id="IPR029044">
    <property type="entry name" value="Nucleotide-diphossugar_trans"/>
</dbReference>
<dbReference type="NCBIfam" id="TIGR00453">
    <property type="entry name" value="ispD"/>
    <property type="match status" value="1"/>
</dbReference>
<dbReference type="PANTHER" id="PTHR32125">
    <property type="entry name" value="2-C-METHYL-D-ERYTHRITOL 4-PHOSPHATE CYTIDYLYLTRANSFERASE, CHLOROPLASTIC"/>
    <property type="match status" value="1"/>
</dbReference>
<dbReference type="PANTHER" id="PTHR32125:SF4">
    <property type="entry name" value="2-C-METHYL-D-ERYTHRITOL 4-PHOSPHATE CYTIDYLYLTRANSFERASE, CHLOROPLASTIC"/>
    <property type="match status" value="1"/>
</dbReference>
<dbReference type="Pfam" id="PF01128">
    <property type="entry name" value="IspD"/>
    <property type="match status" value="1"/>
</dbReference>
<dbReference type="SUPFAM" id="SSF53448">
    <property type="entry name" value="Nucleotide-diphospho-sugar transferases"/>
    <property type="match status" value="1"/>
</dbReference>
<dbReference type="PROSITE" id="PS01295">
    <property type="entry name" value="ISPD"/>
    <property type="match status" value="1"/>
</dbReference>
<sequence length="236" mass="25759">MAATLLDVCAVVPAAGFGRRMQTECPKQYLSIGNKTILEHSVHALLAHPRVTRVVIAISPGDHRFAQLPLANHPQITVVDGGNERADSVLAGLQAVAKAQWVLVHDAARPCLHQDDLARLLTISENSRVGGILASPVRDTMKRGEPGKNAIAHTVERADLWHALTPQFFPRELLHDCLTRALNEGATITDEASALEYCGFHPALVEGRADNIKVTRPEDLALAEFYLTRTIHQEKA</sequence>
<proteinExistence type="inferred from homology"/>
<gene>
    <name evidence="1" type="primary">ispD</name>
    <name type="ordered locus">SEN2769</name>
</gene>